<accession>P10576</accession>
<reference key="1">
    <citation type="journal article" date="1986" name="Proc. Natl. Acad. Sci. U.S.A.">
        <title>Two-component regulatory systems responsive to environmental stimuli share strongly conserved domains with the nitrogen assimilation regulatory genes ntrB and ntrC.</title>
        <authorList>
            <person name="Nixon B.T."/>
            <person name="Ronson C.W."/>
            <person name="Ausubel F.M."/>
        </authorList>
    </citation>
    <scope>NUCLEOTIDE SEQUENCE [GENOMIC DNA]</scope>
</reference>
<gene>
    <name type="primary">ntrC</name>
</gene>
<proteinExistence type="inferred from homology"/>
<keyword id="KW-0010">Activator</keyword>
<keyword id="KW-0067">ATP-binding</keyword>
<keyword id="KW-0963">Cytoplasm</keyword>
<keyword id="KW-0238">DNA-binding</keyword>
<keyword id="KW-0535">Nitrogen fixation</keyword>
<keyword id="KW-0547">Nucleotide-binding</keyword>
<keyword id="KW-0597">Phosphoprotein</keyword>
<keyword id="KW-0678">Repressor</keyword>
<keyword id="KW-0804">Transcription</keyword>
<keyword id="KW-0805">Transcription regulation</keyword>
<keyword id="KW-0902">Two-component regulatory system</keyword>
<sequence length="480" mass="52894">MPAGSILVADDDTAIRTVLNQALSRAGYEVRLTGNAATLWRWVSQGEGDLVITDVVMPDENAFDLLPRIKKMRPNLPVIVMSAQNTFMTAIRPSERGAYEYLPKPFDLKELITIVGRALAEPKERVSSPADDGEFDSIPLVGRSPAMQEIYRVLARLMQTDLTVMISGESGTGKELVARALHDYGRRRNGPFVAVNMAAIPRDLIESELFGHERGAFTGANTRASGRFEQAEGGTLFLDEIGDMPMEAQTRLLRVLQQGEYTTVGGRTPIKTDVRIVAASNKDLRILIQQGLFREDLFFRLNVVPLRVPPLRERIEDLPDLIRHFFSLAEKDGLPPKKLDAQALERLKQHRWPGNVRELENLARRLAALYPQDVITASVIDGELAPPAVTSGSTATVGVDNLGGAVEAYLSSHFSGFPNGVPPPGLYHRILKEIEIPLLTAALAATRGNQIRAADLLGLNRNTLRKKIRDLDIQVYRSGG</sequence>
<protein>
    <recommendedName>
        <fullName evidence="2">DNA-binding transcriptional regulator NtrC</fullName>
    </recommendedName>
    <alternativeName>
        <fullName evidence="2">Nitrogen regulation protein NR(I)</fullName>
    </alternativeName>
    <alternativeName>
        <fullName evidence="2">Nitrogen regulator I</fullName>
        <shortName evidence="2">NRI</shortName>
    </alternativeName>
</protein>
<feature type="chain" id="PRO_0000081171" description="DNA-binding transcriptional regulator NtrC">
    <location>
        <begin position="1"/>
        <end position="480"/>
    </location>
</feature>
<feature type="domain" description="Response regulatory" evidence="3">
    <location>
        <begin position="5"/>
        <end position="119"/>
    </location>
</feature>
<feature type="domain" description="Sigma-54 factor interaction" evidence="4">
    <location>
        <begin position="140"/>
        <end position="368"/>
    </location>
</feature>
<feature type="DNA-binding region" description="H-T-H motif" evidence="1">
    <location>
        <begin position="450"/>
        <end position="469"/>
    </location>
</feature>
<feature type="binding site" evidence="4">
    <location>
        <begin position="168"/>
        <end position="175"/>
    </location>
    <ligand>
        <name>ATP</name>
        <dbReference type="ChEBI" id="CHEBI:30616"/>
    </ligand>
</feature>
<feature type="binding site" evidence="4">
    <location>
        <begin position="231"/>
        <end position="240"/>
    </location>
    <ligand>
        <name>ATP</name>
        <dbReference type="ChEBI" id="CHEBI:30616"/>
    </ligand>
</feature>
<feature type="modified residue" description="4-aspartylphosphate" evidence="3">
    <location>
        <position position="54"/>
    </location>
</feature>
<name>NTRC_BRASR</name>
<dbReference type="EMBL" id="M14227">
    <property type="protein sequence ID" value="AAA26239.1"/>
    <property type="molecule type" value="Genomic_DNA"/>
</dbReference>
<dbReference type="SMR" id="P10576"/>
<dbReference type="GO" id="GO:0005737">
    <property type="term" value="C:cytoplasm"/>
    <property type="evidence" value="ECO:0007669"/>
    <property type="project" value="UniProtKB-SubCell"/>
</dbReference>
<dbReference type="GO" id="GO:0005524">
    <property type="term" value="F:ATP binding"/>
    <property type="evidence" value="ECO:0007669"/>
    <property type="project" value="UniProtKB-KW"/>
</dbReference>
<dbReference type="GO" id="GO:0016887">
    <property type="term" value="F:ATP hydrolysis activity"/>
    <property type="evidence" value="ECO:0007669"/>
    <property type="project" value="InterPro"/>
</dbReference>
<dbReference type="GO" id="GO:0000156">
    <property type="term" value="F:phosphorelay response regulator activity"/>
    <property type="evidence" value="ECO:0007669"/>
    <property type="project" value="InterPro"/>
</dbReference>
<dbReference type="GO" id="GO:0043565">
    <property type="term" value="F:sequence-specific DNA binding"/>
    <property type="evidence" value="ECO:0007669"/>
    <property type="project" value="InterPro"/>
</dbReference>
<dbReference type="GO" id="GO:0009399">
    <property type="term" value="P:nitrogen fixation"/>
    <property type="evidence" value="ECO:0007669"/>
    <property type="project" value="UniProtKB-KW"/>
</dbReference>
<dbReference type="GO" id="GO:0006355">
    <property type="term" value="P:regulation of DNA-templated transcription"/>
    <property type="evidence" value="ECO:0007669"/>
    <property type="project" value="InterPro"/>
</dbReference>
<dbReference type="GO" id="GO:0006808">
    <property type="term" value="P:regulation of nitrogen utilization"/>
    <property type="evidence" value="ECO:0007669"/>
    <property type="project" value="InterPro"/>
</dbReference>
<dbReference type="CDD" id="cd00009">
    <property type="entry name" value="AAA"/>
    <property type="match status" value="1"/>
</dbReference>
<dbReference type="CDD" id="cd19928">
    <property type="entry name" value="REC_RcNtrC-like"/>
    <property type="match status" value="1"/>
</dbReference>
<dbReference type="FunFam" id="3.40.50.300:FF:000006">
    <property type="entry name" value="DNA-binding transcriptional regulator NtrC"/>
    <property type="match status" value="1"/>
</dbReference>
<dbReference type="Gene3D" id="1.10.8.60">
    <property type="match status" value="1"/>
</dbReference>
<dbReference type="Gene3D" id="3.40.50.2300">
    <property type="match status" value="1"/>
</dbReference>
<dbReference type="Gene3D" id="1.10.10.60">
    <property type="entry name" value="Homeodomain-like"/>
    <property type="match status" value="1"/>
</dbReference>
<dbReference type="Gene3D" id="3.40.50.300">
    <property type="entry name" value="P-loop containing nucleotide triphosphate hydrolases"/>
    <property type="match status" value="1"/>
</dbReference>
<dbReference type="InterPro" id="IPR003593">
    <property type="entry name" value="AAA+_ATPase"/>
</dbReference>
<dbReference type="InterPro" id="IPR011006">
    <property type="entry name" value="CheY-like_superfamily"/>
</dbReference>
<dbReference type="InterPro" id="IPR009057">
    <property type="entry name" value="Homeodomain-like_sf"/>
</dbReference>
<dbReference type="InterPro" id="IPR002197">
    <property type="entry name" value="HTH_Fis"/>
</dbReference>
<dbReference type="InterPro" id="IPR027417">
    <property type="entry name" value="P-loop_NTPase"/>
</dbReference>
<dbReference type="InterPro" id="IPR001789">
    <property type="entry name" value="Sig_transdc_resp-reg_receiver"/>
</dbReference>
<dbReference type="InterPro" id="IPR002078">
    <property type="entry name" value="Sigma_54_int"/>
</dbReference>
<dbReference type="InterPro" id="IPR025662">
    <property type="entry name" value="Sigma_54_int_dom_ATP-bd_1"/>
</dbReference>
<dbReference type="InterPro" id="IPR025943">
    <property type="entry name" value="Sigma_54_int_dom_ATP-bd_2"/>
</dbReference>
<dbReference type="InterPro" id="IPR025944">
    <property type="entry name" value="Sigma_54_int_dom_CS"/>
</dbReference>
<dbReference type="InterPro" id="IPR010114">
    <property type="entry name" value="Transcript_reg_NtrC"/>
</dbReference>
<dbReference type="NCBIfam" id="TIGR01818">
    <property type="entry name" value="ntrC"/>
    <property type="match status" value="1"/>
</dbReference>
<dbReference type="PANTHER" id="PTHR32071:SF95">
    <property type="entry name" value="DNA-BINDING TRANSCRIPTIONAL REGULATOR NTRC"/>
    <property type="match status" value="1"/>
</dbReference>
<dbReference type="PANTHER" id="PTHR32071">
    <property type="entry name" value="TRANSCRIPTIONAL REGULATORY PROTEIN"/>
    <property type="match status" value="1"/>
</dbReference>
<dbReference type="Pfam" id="PF02954">
    <property type="entry name" value="HTH_8"/>
    <property type="match status" value="1"/>
</dbReference>
<dbReference type="Pfam" id="PF00072">
    <property type="entry name" value="Response_reg"/>
    <property type="match status" value="1"/>
</dbReference>
<dbReference type="Pfam" id="PF00158">
    <property type="entry name" value="Sigma54_activat"/>
    <property type="match status" value="1"/>
</dbReference>
<dbReference type="PRINTS" id="PR01590">
    <property type="entry name" value="HTHFIS"/>
</dbReference>
<dbReference type="SMART" id="SM00382">
    <property type="entry name" value="AAA"/>
    <property type="match status" value="1"/>
</dbReference>
<dbReference type="SMART" id="SM00448">
    <property type="entry name" value="REC"/>
    <property type="match status" value="1"/>
</dbReference>
<dbReference type="SUPFAM" id="SSF52172">
    <property type="entry name" value="CheY-like"/>
    <property type="match status" value="1"/>
</dbReference>
<dbReference type="SUPFAM" id="SSF46689">
    <property type="entry name" value="Homeodomain-like"/>
    <property type="match status" value="1"/>
</dbReference>
<dbReference type="SUPFAM" id="SSF52540">
    <property type="entry name" value="P-loop containing nucleoside triphosphate hydrolases"/>
    <property type="match status" value="1"/>
</dbReference>
<dbReference type="PROSITE" id="PS50110">
    <property type="entry name" value="RESPONSE_REGULATORY"/>
    <property type="match status" value="1"/>
</dbReference>
<dbReference type="PROSITE" id="PS00675">
    <property type="entry name" value="SIGMA54_INTERACT_1"/>
    <property type="match status" value="1"/>
</dbReference>
<dbReference type="PROSITE" id="PS00676">
    <property type="entry name" value="SIGMA54_INTERACT_2"/>
    <property type="match status" value="1"/>
</dbReference>
<dbReference type="PROSITE" id="PS00688">
    <property type="entry name" value="SIGMA54_INTERACT_3"/>
    <property type="match status" value="1"/>
</dbReference>
<dbReference type="PROSITE" id="PS50045">
    <property type="entry name" value="SIGMA54_INTERACT_4"/>
    <property type="match status" value="1"/>
</dbReference>
<comment type="function">
    <text evidence="2">Member of the two-component regulatory system NtrB/NtrC, which controls expression of the nitrogen-regulated (ntr) genes in response to nitrogen limitation. Phosphorylated NtrC binds directly to DNA and stimulates the formation of open promoter-sigma54-RNA polymerase complexes.</text>
</comment>
<comment type="subcellular location">
    <subcellularLocation>
        <location evidence="2">Cytoplasm</location>
    </subcellularLocation>
</comment>
<comment type="PTM">
    <text evidence="2">Phosphorylated and dephosphorylated by NtrB.</text>
</comment>
<evidence type="ECO:0000250" key="1"/>
<evidence type="ECO:0000250" key="2">
    <source>
        <dbReference type="UniProtKB" id="P0AFB8"/>
    </source>
</evidence>
<evidence type="ECO:0000255" key="3">
    <source>
        <dbReference type="PROSITE-ProRule" id="PRU00169"/>
    </source>
</evidence>
<evidence type="ECO:0000255" key="4">
    <source>
        <dbReference type="PROSITE-ProRule" id="PRU00193"/>
    </source>
</evidence>
<organism>
    <name type="scientific">Bradyrhizobium sp. (strain RP501 Parasponia)</name>
    <dbReference type="NCBI Taxonomy" id="378"/>
    <lineage>
        <taxon>Bacteria</taxon>
        <taxon>Pseudomonadati</taxon>
        <taxon>Pseudomonadota</taxon>
        <taxon>Alphaproteobacteria</taxon>
        <taxon>Hyphomicrobiales</taxon>
        <taxon>Nitrobacteraceae</taxon>
        <taxon>Bradyrhizobium</taxon>
    </lineage>
</organism>